<keyword id="KW-0963">Cytoplasm</keyword>
<keyword id="KW-0312">Gluconeogenesis</keyword>
<keyword id="KW-0324">Glycolysis</keyword>
<keyword id="KW-0413">Isomerase</keyword>
<keyword id="KW-1185">Reference proteome</keyword>
<feature type="chain" id="PRO_0000307531" description="Triosephosphate isomerase">
    <location>
        <begin position="1"/>
        <end position="264"/>
    </location>
</feature>
<feature type="active site" description="Electrophile" evidence="1">
    <location>
        <position position="98"/>
    </location>
</feature>
<feature type="active site" description="Proton acceptor" evidence="1">
    <location>
        <position position="170"/>
    </location>
</feature>
<feature type="binding site" evidence="1">
    <location>
        <begin position="13"/>
        <end position="15"/>
    </location>
    <ligand>
        <name>substrate</name>
    </ligand>
</feature>
<feature type="binding site" evidence="1">
    <location>
        <position position="176"/>
    </location>
    <ligand>
        <name>substrate</name>
    </ligand>
</feature>
<feature type="binding site" evidence="1">
    <location>
        <position position="216"/>
    </location>
    <ligand>
        <name>substrate</name>
    </ligand>
</feature>
<feature type="binding site" evidence="1">
    <location>
        <begin position="237"/>
        <end position="238"/>
    </location>
    <ligand>
        <name>substrate</name>
    </ligand>
</feature>
<reference key="1">
    <citation type="journal article" date="2004" name="Science">
        <title>Illuminating the evolutionary history of chlamydiae.</title>
        <authorList>
            <person name="Horn M."/>
            <person name="Collingro A."/>
            <person name="Schmitz-Esser S."/>
            <person name="Beier C.L."/>
            <person name="Purkhold U."/>
            <person name="Fartmann B."/>
            <person name="Brandt P."/>
            <person name="Nyakatura G.J."/>
            <person name="Droege M."/>
            <person name="Frishman D."/>
            <person name="Rattei T."/>
            <person name="Mewes H.-W."/>
            <person name="Wagner M."/>
        </authorList>
    </citation>
    <scope>NUCLEOTIDE SEQUENCE [LARGE SCALE GENOMIC DNA]</scope>
    <source>
        <strain>UWE25</strain>
    </source>
</reference>
<name>TPIS_PARUW</name>
<gene>
    <name evidence="1" type="primary">tpiA</name>
    <name type="ordered locus">pc0801</name>
</gene>
<accession>Q6MD24</accession>
<proteinExistence type="inferred from homology"/>
<dbReference type="EC" id="5.3.1.1" evidence="1"/>
<dbReference type="EMBL" id="BX908798">
    <property type="protein sequence ID" value="CAF23525.1"/>
    <property type="molecule type" value="Genomic_DNA"/>
</dbReference>
<dbReference type="RefSeq" id="WP_011175351.1">
    <property type="nucleotide sequence ID" value="NC_005861.2"/>
</dbReference>
<dbReference type="SMR" id="Q6MD24"/>
<dbReference type="STRING" id="264201.pc0801"/>
<dbReference type="KEGG" id="pcu:PC_RS03855"/>
<dbReference type="eggNOG" id="COG0149">
    <property type="taxonomic scope" value="Bacteria"/>
</dbReference>
<dbReference type="HOGENOM" id="CLU_024251_2_3_0"/>
<dbReference type="OrthoDB" id="9809429at2"/>
<dbReference type="UniPathway" id="UPA00109">
    <property type="reaction ID" value="UER00189"/>
</dbReference>
<dbReference type="UniPathway" id="UPA00138"/>
<dbReference type="Proteomes" id="UP000000529">
    <property type="component" value="Chromosome"/>
</dbReference>
<dbReference type="GO" id="GO:0005829">
    <property type="term" value="C:cytosol"/>
    <property type="evidence" value="ECO:0007669"/>
    <property type="project" value="TreeGrafter"/>
</dbReference>
<dbReference type="GO" id="GO:0004807">
    <property type="term" value="F:triose-phosphate isomerase activity"/>
    <property type="evidence" value="ECO:0007669"/>
    <property type="project" value="UniProtKB-UniRule"/>
</dbReference>
<dbReference type="GO" id="GO:0006094">
    <property type="term" value="P:gluconeogenesis"/>
    <property type="evidence" value="ECO:0007669"/>
    <property type="project" value="UniProtKB-UniRule"/>
</dbReference>
<dbReference type="GO" id="GO:0046166">
    <property type="term" value="P:glyceraldehyde-3-phosphate biosynthetic process"/>
    <property type="evidence" value="ECO:0007669"/>
    <property type="project" value="TreeGrafter"/>
</dbReference>
<dbReference type="GO" id="GO:0019563">
    <property type="term" value="P:glycerol catabolic process"/>
    <property type="evidence" value="ECO:0007669"/>
    <property type="project" value="TreeGrafter"/>
</dbReference>
<dbReference type="GO" id="GO:0006096">
    <property type="term" value="P:glycolytic process"/>
    <property type="evidence" value="ECO:0007669"/>
    <property type="project" value="UniProtKB-UniRule"/>
</dbReference>
<dbReference type="CDD" id="cd00311">
    <property type="entry name" value="TIM"/>
    <property type="match status" value="1"/>
</dbReference>
<dbReference type="FunFam" id="3.20.20.70:FF:000016">
    <property type="entry name" value="Triosephosphate isomerase"/>
    <property type="match status" value="1"/>
</dbReference>
<dbReference type="Gene3D" id="3.20.20.70">
    <property type="entry name" value="Aldolase class I"/>
    <property type="match status" value="1"/>
</dbReference>
<dbReference type="HAMAP" id="MF_00147_B">
    <property type="entry name" value="TIM_B"/>
    <property type="match status" value="1"/>
</dbReference>
<dbReference type="InterPro" id="IPR013785">
    <property type="entry name" value="Aldolase_TIM"/>
</dbReference>
<dbReference type="InterPro" id="IPR035990">
    <property type="entry name" value="TIM_sf"/>
</dbReference>
<dbReference type="InterPro" id="IPR022896">
    <property type="entry name" value="TrioseP_Isoase_bac/euk"/>
</dbReference>
<dbReference type="InterPro" id="IPR000652">
    <property type="entry name" value="Triosephosphate_isomerase"/>
</dbReference>
<dbReference type="NCBIfam" id="TIGR00419">
    <property type="entry name" value="tim"/>
    <property type="match status" value="1"/>
</dbReference>
<dbReference type="PANTHER" id="PTHR21139">
    <property type="entry name" value="TRIOSEPHOSPHATE ISOMERASE"/>
    <property type="match status" value="1"/>
</dbReference>
<dbReference type="PANTHER" id="PTHR21139:SF42">
    <property type="entry name" value="TRIOSEPHOSPHATE ISOMERASE"/>
    <property type="match status" value="1"/>
</dbReference>
<dbReference type="Pfam" id="PF00121">
    <property type="entry name" value="TIM"/>
    <property type="match status" value="1"/>
</dbReference>
<dbReference type="SUPFAM" id="SSF51351">
    <property type="entry name" value="Triosephosphate isomerase (TIM)"/>
    <property type="match status" value="1"/>
</dbReference>
<dbReference type="PROSITE" id="PS51440">
    <property type="entry name" value="TIM_2"/>
    <property type="match status" value="1"/>
</dbReference>
<protein>
    <recommendedName>
        <fullName evidence="1">Triosephosphate isomerase</fullName>
        <shortName evidence="1">TIM</shortName>
        <shortName evidence="1">TPI</shortName>
        <ecNumber evidence="1">5.3.1.1</ecNumber>
    </recommendedName>
    <alternativeName>
        <fullName evidence="1">Triose-phosphate isomerase</fullName>
    </alternativeName>
</protein>
<sequence length="264" mass="28964">MSPSHRPVVITGNWKMYKTVKEACTFAKALLPVVEVSPIQVWIAVPFTAIYPVKQEIRNSRLVIGAQNMNDASEGAFTGEIAGKMVKEAGASFVLLGHSERRHLYKEDNAFINRKVKKALEIGLTPVLCVGETFEERKSGETQQIIRTQIQECLAGLTAEDLKTLIIAYEPVWAIGNGQNAKPEGAQEIHQFCRKIIKEIFSEELAEQIVIQYGGSVNPSNAISLLKQPDIDGLLIGGASLSLETFVEIVNDGGSIFNLKAKLL</sequence>
<evidence type="ECO:0000255" key="1">
    <source>
        <dbReference type="HAMAP-Rule" id="MF_00147"/>
    </source>
</evidence>
<comment type="function">
    <text evidence="1">Involved in the gluconeogenesis. Catalyzes stereospecifically the conversion of dihydroxyacetone phosphate (DHAP) to D-glyceraldehyde-3-phosphate (G3P).</text>
</comment>
<comment type="catalytic activity">
    <reaction evidence="1">
        <text>D-glyceraldehyde 3-phosphate = dihydroxyacetone phosphate</text>
        <dbReference type="Rhea" id="RHEA:18585"/>
        <dbReference type="ChEBI" id="CHEBI:57642"/>
        <dbReference type="ChEBI" id="CHEBI:59776"/>
        <dbReference type="EC" id="5.3.1.1"/>
    </reaction>
</comment>
<comment type="pathway">
    <text evidence="1">Carbohydrate biosynthesis; gluconeogenesis.</text>
</comment>
<comment type="pathway">
    <text evidence="1">Carbohydrate degradation; glycolysis; D-glyceraldehyde 3-phosphate from glycerone phosphate: step 1/1.</text>
</comment>
<comment type="subunit">
    <text evidence="1">Homodimer.</text>
</comment>
<comment type="subcellular location">
    <subcellularLocation>
        <location evidence="1">Cytoplasm</location>
    </subcellularLocation>
</comment>
<comment type="similarity">
    <text evidence="1">Belongs to the triosephosphate isomerase family.</text>
</comment>
<organism>
    <name type="scientific">Protochlamydia amoebophila (strain UWE25)</name>
    <dbReference type="NCBI Taxonomy" id="264201"/>
    <lineage>
        <taxon>Bacteria</taxon>
        <taxon>Pseudomonadati</taxon>
        <taxon>Chlamydiota</taxon>
        <taxon>Chlamydiia</taxon>
        <taxon>Parachlamydiales</taxon>
        <taxon>Parachlamydiaceae</taxon>
        <taxon>Candidatus Protochlamydia</taxon>
    </lineage>
</organism>